<sequence>MVCVPCIIIPLLLYIWHKFVQPILLRYWNPWEKKDDDGNVIKKGPDFPFECKGGVCPFVPGGKKTENVSDDDAEESENPPLNATAMAAETEVDESKKEI</sequence>
<reference key="1">
    <citation type="journal article" date="2000" name="Science">
        <title>The genome sequence of Drosophila melanogaster.</title>
        <authorList>
            <person name="Adams M.D."/>
            <person name="Celniker S.E."/>
            <person name="Holt R.A."/>
            <person name="Evans C.A."/>
            <person name="Gocayne J.D."/>
            <person name="Amanatides P.G."/>
            <person name="Scherer S.E."/>
            <person name="Li P.W."/>
            <person name="Hoskins R.A."/>
            <person name="Galle R.F."/>
            <person name="George R.A."/>
            <person name="Lewis S.E."/>
            <person name="Richards S."/>
            <person name="Ashburner M."/>
            <person name="Henderson S.N."/>
            <person name="Sutton G.G."/>
            <person name="Wortman J.R."/>
            <person name="Yandell M.D."/>
            <person name="Zhang Q."/>
            <person name="Chen L.X."/>
            <person name="Brandon R.C."/>
            <person name="Rogers Y.-H.C."/>
            <person name="Blazej R.G."/>
            <person name="Champe M."/>
            <person name="Pfeiffer B.D."/>
            <person name="Wan K.H."/>
            <person name="Doyle C."/>
            <person name="Baxter E.G."/>
            <person name="Helt G."/>
            <person name="Nelson C.R."/>
            <person name="Miklos G.L.G."/>
            <person name="Abril J.F."/>
            <person name="Agbayani A."/>
            <person name="An H.-J."/>
            <person name="Andrews-Pfannkoch C."/>
            <person name="Baldwin D."/>
            <person name="Ballew R.M."/>
            <person name="Basu A."/>
            <person name="Baxendale J."/>
            <person name="Bayraktaroglu L."/>
            <person name="Beasley E.M."/>
            <person name="Beeson K.Y."/>
            <person name="Benos P.V."/>
            <person name="Berman B.P."/>
            <person name="Bhandari D."/>
            <person name="Bolshakov S."/>
            <person name="Borkova D."/>
            <person name="Botchan M.R."/>
            <person name="Bouck J."/>
            <person name="Brokstein P."/>
            <person name="Brottier P."/>
            <person name="Burtis K.C."/>
            <person name="Busam D.A."/>
            <person name="Butler H."/>
            <person name="Cadieu E."/>
            <person name="Center A."/>
            <person name="Chandra I."/>
            <person name="Cherry J.M."/>
            <person name="Cawley S."/>
            <person name="Dahlke C."/>
            <person name="Davenport L.B."/>
            <person name="Davies P."/>
            <person name="de Pablos B."/>
            <person name="Delcher A."/>
            <person name="Deng Z."/>
            <person name="Mays A.D."/>
            <person name="Dew I."/>
            <person name="Dietz S.M."/>
            <person name="Dodson K."/>
            <person name="Doup L.E."/>
            <person name="Downes M."/>
            <person name="Dugan-Rocha S."/>
            <person name="Dunkov B.C."/>
            <person name="Dunn P."/>
            <person name="Durbin K.J."/>
            <person name="Evangelista C.C."/>
            <person name="Ferraz C."/>
            <person name="Ferriera S."/>
            <person name="Fleischmann W."/>
            <person name="Fosler C."/>
            <person name="Gabrielian A.E."/>
            <person name="Garg N.S."/>
            <person name="Gelbart W.M."/>
            <person name="Glasser K."/>
            <person name="Glodek A."/>
            <person name="Gong F."/>
            <person name="Gorrell J.H."/>
            <person name="Gu Z."/>
            <person name="Guan P."/>
            <person name="Harris M."/>
            <person name="Harris N.L."/>
            <person name="Harvey D.A."/>
            <person name="Heiman T.J."/>
            <person name="Hernandez J.R."/>
            <person name="Houck J."/>
            <person name="Hostin D."/>
            <person name="Houston K.A."/>
            <person name="Howland T.J."/>
            <person name="Wei M.-H."/>
            <person name="Ibegwam C."/>
            <person name="Jalali M."/>
            <person name="Kalush F."/>
            <person name="Karpen G.H."/>
            <person name="Ke Z."/>
            <person name="Kennison J.A."/>
            <person name="Ketchum K.A."/>
            <person name="Kimmel B.E."/>
            <person name="Kodira C.D."/>
            <person name="Kraft C.L."/>
            <person name="Kravitz S."/>
            <person name="Kulp D."/>
            <person name="Lai Z."/>
            <person name="Lasko P."/>
            <person name="Lei Y."/>
            <person name="Levitsky A.A."/>
            <person name="Li J.H."/>
            <person name="Li Z."/>
            <person name="Liang Y."/>
            <person name="Lin X."/>
            <person name="Liu X."/>
            <person name="Mattei B."/>
            <person name="McIntosh T.C."/>
            <person name="McLeod M.P."/>
            <person name="McPherson D."/>
            <person name="Merkulov G."/>
            <person name="Milshina N.V."/>
            <person name="Mobarry C."/>
            <person name="Morris J."/>
            <person name="Moshrefi A."/>
            <person name="Mount S.M."/>
            <person name="Moy M."/>
            <person name="Murphy B."/>
            <person name="Murphy L."/>
            <person name="Muzny D.M."/>
            <person name="Nelson D.L."/>
            <person name="Nelson D.R."/>
            <person name="Nelson K.A."/>
            <person name="Nixon K."/>
            <person name="Nusskern D.R."/>
            <person name="Pacleb J.M."/>
            <person name="Palazzolo M."/>
            <person name="Pittman G.S."/>
            <person name="Pan S."/>
            <person name="Pollard J."/>
            <person name="Puri V."/>
            <person name="Reese M.G."/>
            <person name="Reinert K."/>
            <person name="Remington K."/>
            <person name="Saunders R.D.C."/>
            <person name="Scheeler F."/>
            <person name="Shen H."/>
            <person name="Shue B.C."/>
            <person name="Siden-Kiamos I."/>
            <person name="Simpson M."/>
            <person name="Skupski M.P."/>
            <person name="Smith T.J."/>
            <person name="Spier E."/>
            <person name="Spradling A.C."/>
            <person name="Stapleton M."/>
            <person name="Strong R."/>
            <person name="Sun E."/>
            <person name="Svirskas R."/>
            <person name="Tector C."/>
            <person name="Turner R."/>
            <person name="Venter E."/>
            <person name="Wang A.H."/>
            <person name="Wang X."/>
            <person name="Wang Z.-Y."/>
            <person name="Wassarman D.A."/>
            <person name="Weinstock G.M."/>
            <person name="Weissenbach J."/>
            <person name="Williams S.M."/>
            <person name="Woodage T."/>
            <person name="Worley K.C."/>
            <person name="Wu D."/>
            <person name="Yang S."/>
            <person name="Yao Q.A."/>
            <person name="Ye J."/>
            <person name="Yeh R.-F."/>
            <person name="Zaveri J.S."/>
            <person name="Zhan M."/>
            <person name="Zhang G."/>
            <person name="Zhao Q."/>
            <person name="Zheng L."/>
            <person name="Zheng X.H."/>
            <person name="Zhong F.N."/>
            <person name="Zhong W."/>
            <person name="Zhou X."/>
            <person name="Zhu S.C."/>
            <person name="Zhu X."/>
            <person name="Smith H.O."/>
            <person name="Gibbs R.A."/>
            <person name="Myers E.W."/>
            <person name="Rubin G.M."/>
            <person name="Venter J.C."/>
        </authorList>
    </citation>
    <scope>NUCLEOTIDE SEQUENCE [LARGE SCALE GENOMIC DNA]</scope>
    <source>
        <strain>Berkeley</strain>
    </source>
</reference>
<reference key="2">
    <citation type="journal article" date="2002" name="Genome Biol.">
        <title>Annotation of the Drosophila melanogaster euchromatic genome: a systematic review.</title>
        <authorList>
            <person name="Misra S."/>
            <person name="Crosby M.A."/>
            <person name="Mungall C.J."/>
            <person name="Matthews B.B."/>
            <person name="Campbell K.S."/>
            <person name="Hradecky P."/>
            <person name="Huang Y."/>
            <person name="Kaminker J.S."/>
            <person name="Millburn G.H."/>
            <person name="Prochnik S.E."/>
            <person name="Smith C.D."/>
            <person name="Tupy J.L."/>
            <person name="Whitfield E.J."/>
            <person name="Bayraktaroglu L."/>
            <person name="Berman B.P."/>
            <person name="Bettencourt B.R."/>
            <person name="Celniker S.E."/>
            <person name="de Grey A.D.N.J."/>
            <person name="Drysdale R.A."/>
            <person name="Harris N.L."/>
            <person name="Richter J."/>
            <person name="Russo S."/>
            <person name="Schroeder A.J."/>
            <person name="Shu S.Q."/>
            <person name="Stapleton M."/>
            <person name="Yamada C."/>
            <person name="Ashburner M."/>
            <person name="Gelbart W.M."/>
            <person name="Rubin G.M."/>
            <person name="Lewis S.E."/>
        </authorList>
    </citation>
    <scope>GENOME REANNOTATION</scope>
    <source>
        <strain>Berkeley</strain>
    </source>
</reference>
<reference key="3">
    <citation type="journal article" date="2000" name="Science">
        <title>From sequence to chromosome: the tip of the X chromosome of D. melanogaster.</title>
        <authorList>
            <person name="Benos P.V."/>
            <person name="Gatt M.K."/>
            <person name="Ashburner M."/>
            <person name="Murphy L."/>
            <person name="Harris D."/>
            <person name="Barrell B.G."/>
            <person name="Ferraz C."/>
            <person name="Vidal S."/>
            <person name="Brun C."/>
            <person name="Demailles J."/>
            <person name="Cadieu E."/>
            <person name="Dreano S."/>
            <person name="Gloux S."/>
            <person name="Lelaure V."/>
            <person name="Mottier S."/>
            <person name="Galibert F."/>
            <person name="Borkova D."/>
            <person name="Minana B."/>
            <person name="Kafatos F.C."/>
            <person name="Louis C."/>
            <person name="Siden-Kiamos I."/>
            <person name="Bolshakov S."/>
            <person name="Papagiannakis G."/>
            <person name="Spanos L."/>
            <person name="Cox S."/>
            <person name="Madueno E."/>
            <person name="de Pablos B."/>
            <person name="Modolell J."/>
            <person name="Peter A."/>
            <person name="Schoettler P."/>
            <person name="Werner M."/>
            <person name="Mourkioti F."/>
            <person name="Beinert N."/>
            <person name="Dowe G."/>
            <person name="Schaefer U."/>
            <person name="Jaeckle H."/>
            <person name="Bucheton A."/>
            <person name="Callister D.M."/>
            <person name="Campbell L.A."/>
            <person name="Darlamitsou A."/>
            <person name="Henderson N.S."/>
            <person name="McMillan P.J."/>
            <person name="Salles C."/>
            <person name="Tait E.A."/>
            <person name="Valenti P."/>
            <person name="Saunders R.D.C."/>
            <person name="Glover D.M."/>
        </authorList>
    </citation>
    <scope>NUCLEOTIDE SEQUENCE [LARGE SCALE GENOMIC DNA]</scope>
    <source>
        <strain>Oregon-R</strain>
    </source>
</reference>
<reference key="4">
    <citation type="journal article" date="2005" name="Genetics">
        <title>Multiple signatures of positive selection downstream of notch on the X chromosome in Drosophila melanogaster.</title>
        <authorList>
            <person name="DuMont V.B."/>
            <person name="Aquadro C.F."/>
        </authorList>
    </citation>
    <scope>NUCLEOTIDE SEQUENCE [GENOMIC DNA]</scope>
    <scope>VARIANT ASN-72</scope>
    <source>
        <strain>Us13</strain>
        <strain>Usa1</strain>
        <strain>Usa11</strain>
        <strain>Usa12</strain>
        <strain>Usa15</strain>
        <strain>Usa16</strain>
        <strain>Usa17</strain>
        <strain>Usa18</strain>
        <strain>Usa2</strain>
        <strain>Usa3</strain>
        <strain>Usa4</strain>
        <strain>Usa6</strain>
        <strain>Usa7</strain>
        <strain>Usa8</strain>
        <strain>Usa9</strain>
        <strain>Z36</strain>
        <strain>Z50</strain>
        <strain>Zim10</strain>
        <strain>Zim13</strain>
        <strain>Zim15</strain>
        <strain>Zim16</strain>
        <strain>Zim18</strain>
        <strain>Zim22</strain>
        <strain>Zim39</strain>
        <strain>Zim41</strain>
        <strain>Zim42</strain>
        <strain>Zim7</strain>
    </source>
</reference>
<reference key="5">
    <citation type="journal article" date="2008" name="J. Proteome Res.">
        <title>Phosphoproteome analysis of Drosophila melanogaster embryos.</title>
        <authorList>
            <person name="Zhai B."/>
            <person name="Villen J."/>
            <person name="Beausoleil S.A."/>
            <person name="Mintseris J."/>
            <person name="Gygi S.P."/>
        </authorList>
    </citation>
    <scope>PHOSPHORYLATION [LARGE SCALE ANALYSIS] AT SER-69</scope>
    <scope>IDENTIFICATION BY MASS SPECTROMETRY</scope>
    <source>
        <tissue>Embryo</tissue>
    </source>
</reference>
<protein>
    <recommendedName>
        <fullName>UPF0729 protein CG18508</fullName>
    </recommendedName>
</protein>
<name>U729_DROME</name>
<accession>O97172</accession>
<accession>Q32UZ2</accession>
<gene>
    <name type="ORF">CG18508</name>
</gene>
<comment type="similarity">
    <text evidence="4">Belongs to the UPF0729 family.</text>
</comment>
<feature type="chain" id="PRO_0000365093" description="UPF0729 protein CG18508">
    <location>
        <begin position="1"/>
        <end position="99"/>
    </location>
</feature>
<feature type="region of interest" description="Disordered" evidence="1">
    <location>
        <begin position="60"/>
        <end position="99"/>
    </location>
</feature>
<feature type="compositionally biased region" description="Acidic residues" evidence="1">
    <location>
        <begin position="68"/>
        <end position="77"/>
    </location>
</feature>
<feature type="modified residue" description="Phosphoserine" evidence="3">
    <location>
        <position position="69"/>
    </location>
</feature>
<feature type="sequence variant" description="In strain: Usa7, Z36, Z50, Zim7, Zim10, Zim13, Zim15, Zim16, Zim18, Zim39 Zim41 and Zim42." evidence="2">
    <original>D</original>
    <variation>N</variation>
    <location>
        <position position="72"/>
    </location>
</feature>
<proteinExistence type="evidence at protein level"/>
<dbReference type="EMBL" id="AE014298">
    <property type="protein sequence ID" value="AAF45849.1"/>
    <property type="molecule type" value="Genomic_DNA"/>
</dbReference>
<dbReference type="EMBL" id="AL035395">
    <property type="protein sequence ID" value="CAB37612.1"/>
    <property type="molecule type" value="Genomic_DNA"/>
</dbReference>
<dbReference type="EMBL" id="AY795911">
    <property type="protein sequence ID" value="AAY27430.1"/>
    <property type="molecule type" value="Genomic_DNA"/>
</dbReference>
<dbReference type="EMBL" id="AY795912">
    <property type="protein sequence ID" value="AAY27435.1"/>
    <property type="molecule type" value="Genomic_DNA"/>
</dbReference>
<dbReference type="EMBL" id="AY795913">
    <property type="protein sequence ID" value="AAY27439.1"/>
    <property type="molecule type" value="Genomic_DNA"/>
</dbReference>
<dbReference type="EMBL" id="AY795914">
    <property type="protein sequence ID" value="AAY27443.1"/>
    <property type="molecule type" value="Genomic_DNA"/>
</dbReference>
<dbReference type="EMBL" id="AY795915">
    <property type="protein sequence ID" value="AAY27447.1"/>
    <property type="molecule type" value="Genomic_DNA"/>
</dbReference>
<dbReference type="EMBL" id="AY795916">
    <property type="protein sequence ID" value="AAY27451.1"/>
    <property type="molecule type" value="Genomic_DNA"/>
</dbReference>
<dbReference type="EMBL" id="AY795917">
    <property type="protein sequence ID" value="AAY27455.1"/>
    <property type="molecule type" value="Genomic_DNA"/>
</dbReference>
<dbReference type="EMBL" id="AY795918">
    <property type="protein sequence ID" value="AAY27459.1"/>
    <property type="molecule type" value="Genomic_DNA"/>
</dbReference>
<dbReference type="EMBL" id="AY795919">
    <property type="protein sequence ID" value="AAY27463.1"/>
    <property type="molecule type" value="Genomic_DNA"/>
</dbReference>
<dbReference type="EMBL" id="AY795920">
    <property type="protein sequence ID" value="AAY27467.1"/>
    <property type="molecule type" value="Genomic_DNA"/>
</dbReference>
<dbReference type="EMBL" id="AY795921">
    <property type="protein sequence ID" value="AAY27471.1"/>
    <property type="molecule type" value="Genomic_DNA"/>
</dbReference>
<dbReference type="EMBL" id="AY795922">
    <property type="protein sequence ID" value="AAY27475.1"/>
    <property type="molecule type" value="Genomic_DNA"/>
</dbReference>
<dbReference type="EMBL" id="AY795923">
    <property type="protein sequence ID" value="AAY27479.1"/>
    <property type="molecule type" value="Genomic_DNA"/>
</dbReference>
<dbReference type="EMBL" id="AY795924">
    <property type="protein sequence ID" value="AAY27483.1"/>
    <property type="molecule type" value="Genomic_DNA"/>
</dbReference>
<dbReference type="EMBL" id="AY795925">
    <property type="protein sequence ID" value="AAY27487.1"/>
    <property type="molecule type" value="Genomic_DNA"/>
</dbReference>
<dbReference type="EMBL" id="AY795926">
    <property type="protein sequence ID" value="AAY27491.1"/>
    <property type="molecule type" value="Genomic_DNA"/>
</dbReference>
<dbReference type="EMBL" id="AY795927">
    <property type="protein sequence ID" value="AAY27495.1"/>
    <property type="molecule type" value="Genomic_DNA"/>
</dbReference>
<dbReference type="EMBL" id="AY795928">
    <property type="protein sequence ID" value="AAY27499.1"/>
    <property type="molecule type" value="Genomic_DNA"/>
</dbReference>
<dbReference type="EMBL" id="AY795929">
    <property type="protein sequence ID" value="AAY27503.1"/>
    <property type="molecule type" value="Genomic_DNA"/>
</dbReference>
<dbReference type="EMBL" id="AY795930">
    <property type="protein sequence ID" value="AAY27507.1"/>
    <property type="molecule type" value="Genomic_DNA"/>
</dbReference>
<dbReference type="EMBL" id="AY795931">
    <property type="protein sequence ID" value="AAY27511.1"/>
    <property type="molecule type" value="Genomic_DNA"/>
</dbReference>
<dbReference type="EMBL" id="AY795932">
    <property type="protein sequence ID" value="AAY27515.1"/>
    <property type="molecule type" value="Genomic_DNA"/>
</dbReference>
<dbReference type="EMBL" id="AY795933">
    <property type="protein sequence ID" value="AAY27519.1"/>
    <property type="molecule type" value="Genomic_DNA"/>
</dbReference>
<dbReference type="EMBL" id="AY795934">
    <property type="protein sequence ID" value="AAY27523.1"/>
    <property type="molecule type" value="Genomic_DNA"/>
</dbReference>
<dbReference type="EMBL" id="AY795935">
    <property type="protein sequence ID" value="AAY27527.1"/>
    <property type="molecule type" value="Genomic_DNA"/>
</dbReference>
<dbReference type="EMBL" id="AY795936">
    <property type="protein sequence ID" value="AAY27531.1"/>
    <property type="molecule type" value="Genomic_DNA"/>
</dbReference>
<dbReference type="EMBL" id="AY795937">
    <property type="protein sequence ID" value="AAY27535.1"/>
    <property type="molecule type" value="Genomic_DNA"/>
</dbReference>
<dbReference type="RefSeq" id="NP_001284836.1">
    <property type="nucleotide sequence ID" value="NM_001297907.1"/>
</dbReference>
<dbReference type="RefSeq" id="NP_652721.1">
    <property type="nucleotide sequence ID" value="NM_144464.3"/>
</dbReference>
<dbReference type="BioGRID" id="72855">
    <property type="interactions" value="64"/>
</dbReference>
<dbReference type="FunCoup" id="O97172">
    <property type="interactions" value="42"/>
</dbReference>
<dbReference type="IntAct" id="O97172">
    <property type="interactions" value="62"/>
</dbReference>
<dbReference type="iPTMnet" id="O97172"/>
<dbReference type="PaxDb" id="7227-FBpp0070518"/>
<dbReference type="DNASU" id="59253"/>
<dbReference type="EnsemblMetazoa" id="FBtr0070543">
    <property type="protein sequence ID" value="FBpp0070518"/>
    <property type="gene ID" value="FBgn0028746"/>
</dbReference>
<dbReference type="EnsemblMetazoa" id="FBtr0345708">
    <property type="protein sequence ID" value="FBpp0311752"/>
    <property type="gene ID" value="FBgn0028746"/>
</dbReference>
<dbReference type="GeneID" id="59253"/>
<dbReference type="KEGG" id="dme:Dmel_CG18508"/>
<dbReference type="UCSC" id="CG18508-RA">
    <property type="organism name" value="d. melanogaster"/>
</dbReference>
<dbReference type="AGR" id="FB:FBgn0028746"/>
<dbReference type="FlyBase" id="FBgn0028746">
    <property type="gene designation" value="CG18508"/>
</dbReference>
<dbReference type="VEuPathDB" id="VectorBase:FBgn0028746"/>
<dbReference type="eggNOG" id="ENOG502SEY0">
    <property type="taxonomic scope" value="Eukaryota"/>
</dbReference>
<dbReference type="HOGENOM" id="CLU_167079_0_0_1"/>
<dbReference type="InParanoid" id="O97172"/>
<dbReference type="OMA" id="ATDAKEC"/>
<dbReference type="OrthoDB" id="10062823at2759"/>
<dbReference type="PhylomeDB" id="O97172"/>
<dbReference type="BioGRID-ORCS" id="59253">
    <property type="hits" value="0 hits in 1 CRISPR screen"/>
</dbReference>
<dbReference type="GenomeRNAi" id="59253"/>
<dbReference type="PRO" id="PR:O97172"/>
<dbReference type="Proteomes" id="UP000000803">
    <property type="component" value="Chromosome X"/>
</dbReference>
<dbReference type="Bgee" id="FBgn0028746">
    <property type="expression patterns" value="Expressed in adult middle midgut class I enteroendocrine cell in adult midgut (Drosophila) and 150 other cell types or tissues"/>
</dbReference>
<dbReference type="ExpressionAtlas" id="O97172">
    <property type="expression patterns" value="baseline and differential"/>
</dbReference>
<dbReference type="InterPro" id="IPR026776">
    <property type="entry name" value="UPF0729_C18orf32-like"/>
</dbReference>
<dbReference type="PANTHER" id="PTHR13456">
    <property type="entry name" value="UPF0729 PROTEIN C18ORF32"/>
    <property type="match status" value="1"/>
</dbReference>
<dbReference type="PANTHER" id="PTHR13456:SF0">
    <property type="entry name" value="UPF0729 PROTEIN C18ORF32"/>
    <property type="match status" value="1"/>
</dbReference>
<dbReference type="Pfam" id="PF14975">
    <property type="entry name" value="DUF4512"/>
    <property type="match status" value="1"/>
</dbReference>
<organism>
    <name type="scientific">Drosophila melanogaster</name>
    <name type="common">Fruit fly</name>
    <dbReference type="NCBI Taxonomy" id="7227"/>
    <lineage>
        <taxon>Eukaryota</taxon>
        <taxon>Metazoa</taxon>
        <taxon>Ecdysozoa</taxon>
        <taxon>Arthropoda</taxon>
        <taxon>Hexapoda</taxon>
        <taxon>Insecta</taxon>
        <taxon>Pterygota</taxon>
        <taxon>Neoptera</taxon>
        <taxon>Endopterygota</taxon>
        <taxon>Diptera</taxon>
        <taxon>Brachycera</taxon>
        <taxon>Muscomorpha</taxon>
        <taxon>Ephydroidea</taxon>
        <taxon>Drosophilidae</taxon>
        <taxon>Drosophila</taxon>
        <taxon>Sophophora</taxon>
    </lineage>
</organism>
<keyword id="KW-0597">Phosphoprotein</keyword>
<keyword id="KW-1185">Reference proteome</keyword>
<evidence type="ECO:0000256" key="1">
    <source>
        <dbReference type="SAM" id="MobiDB-lite"/>
    </source>
</evidence>
<evidence type="ECO:0000269" key="2">
    <source>
    </source>
</evidence>
<evidence type="ECO:0000269" key="3">
    <source>
    </source>
</evidence>
<evidence type="ECO:0000305" key="4"/>